<proteinExistence type="inferred from homology"/>
<reference key="1">
    <citation type="journal article" date="2001" name="J. Bacteriol.">
        <title>Genome sequence and comparative analysis of the solvent-producing bacterium Clostridium acetobutylicum.</title>
        <authorList>
            <person name="Noelling J."/>
            <person name="Breton G."/>
            <person name="Omelchenko M.V."/>
            <person name="Makarova K.S."/>
            <person name="Zeng Q."/>
            <person name="Gibson R."/>
            <person name="Lee H.M."/>
            <person name="Dubois J."/>
            <person name="Qiu D."/>
            <person name="Hitti J."/>
            <person name="Wolf Y.I."/>
            <person name="Tatusov R.L."/>
            <person name="Sabathe F."/>
            <person name="Doucette-Stamm L.A."/>
            <person name="Soucaille P."/>
            <person name="Daly M.J."/>
            <person name="Bennett G.N."/>
            <person name="Koonin E.V."/>
            <person name="Smith D.R."/>
        </authorList>
    </citation>
    <scope>NUCLEOTIDE SEQUENCE [LARGE SCALE GENOMIC DNA]</scope>
    <source>
        <strain>ATCC 824 / DSM 792 / JCM 1419 / IAM 19013 / LMG 5710 / NBRC 13948 / NRRL B-527 / VKM B-1787 / 2291 / W</strain>
    </source>
</reference>
<protein>
    <recommendedName>
        <fullName evidence="1">Anti-sigma F factor</fullName>
        <ecNumber evidence="1">2.7.11.1</ecNumber>
    </recommendedName>
    <alternativeName>
        <fullName evidence="1">Stage II sporulation protein AB</fullName>
    </alternativeName>
</protein>
<gene>
    <name evidence="1" type="primary">spoIIAB</name>
    <name type="ordered locus">CA_C2307</name>
</gene>
<dbReference type="EC" id="2.7.11.1" evidence="1"/>
<dbReference type="EMBL" id="AE001437">
    <property type="protein sequence ID" value="AAK80263.1"/>
    <property type="molecule type" value="Genomic_DNA"/>
</dbReference>
<dbReference type="PIR" id="D97184">
    <property type="entry name" value="D97184"/>
</dbReference>
<dbReference type="RefSeq" id="NP_348923.1">
    <property type="nucleotide sequence ID" value="NC_003030.1"/>
</dbReference>
<dbReference type="RefSeq" id="WP_010965604.1">
    <property type="nucleotide sequence ID" value="NC_003030.1"/>
</dbReference>
<dbReference type="SMR" id="Q97GQ9"/>
<dbReference type="STRING" id="272562.CA_C2307"/>
<dbReference type="GeneID" id="44998783"/>
<dbReference type="KEGG" id="cac:CA_C2307"/>
<dbReference type="PATRIC" id="fig|272562.8.peg.2504"/>
<dbReference type="eggNOG" id="COG2172">
    <property type="taxonomic scope" value="Bacteria"/>
</dbReference>
<dbReference type="HOGENOM" id="CLU_090336_11_0_9"/>
<dbReference type="OrthoDB" id="9768808at2"/>
<dbReference type="Proteomes" id="UP000000814">
    <property type="component" value="Chromosome"/>
</dbReference>
<dbReference type="GO" id="GO:0005524">
    <property type="term" value="F:ATP binding"/>
    <property type="evidence" value="ECO:0007669"/>
    <property type="project" value="UniProtKB-KW"/>
</dbReference>
<dbReference type="GO" id="GO:0106310">
    <property type="term" value="F:protein serine kinase activity"/>
    <property type="evidence" value="ECO:0007669"/>
    <property type="project" value="RHEA"/>
</dbReference>
<dbReference type="GO" id="GO:0004674">
    <property type="term" value="F:protein serine/threonine kinase activity"/>
    <property type="evidence" value="ECO:0007669"/>
    <property type="project" value="UniProtKB-KW"/>
</dbReference>
<dbReference type="GO" id="GO:0016989">
    <property type="term" value="F:sigma factor antagonist activity"/>
    <property type="evidence" value="ECO:0007669"/>
    <property type="project" value="InterPro"/>
</dbReference>
<dbReference type="GO" id="GO:0030436">
    <property type="term" value="P:asexual sporulation"/>
    <property type="evidence" value="ECO:0007669"/>
    <property type="project" value="UniProtKB-UniRule"/>
</dbReference>
<dbReference type="GO" id="GO:0042174">
    <property type="term" value="P:negative regulation of sporulation resulting in formation of a cellular spore"/>
    <property type="evidence" value="ECO:0007669"/>
    <property type="project" value="InterPro"/>
</dbReference>
<dbReference type="GO" id="GO:0030435">
    <property type="term" value="P:sporulation resulting in formation of a cellular spore"/>
    <property type="evidence" value="ECO:0007669"/>
    <property type="project" value="UniProtKB-KW"/>
</dbReference>
<dbReference type="Gene3D" id="3.30.565.10">
    <property type="entry name" value="Histidine kinase-like ATPase, C-terminal domain"/>
    <property type="match status" value="1"/>
</dbReference>
<dbReference type="HAMAP" id="MF_00637">
    <property type="entry name" value="Anti_sigma_F"/>
    <property type="match status" value="1"/>
</dbReference>
<dbReference type="InterPro" id="IPR050267">
    <property type="entry name" value="Anti-sigma-factor_SerPK"/>
</dbReference>
<dbReference type="InterPro" id="IPR010194">
    <property type="entry name" value="Anti-sigma_F"/>
</dbReference>
<dbReference type="InterPro" id="IPR036890">
    <property type="entry name" value="HATPase_C_sf"/>
</dbReference>
<dbReference type="NCBIfam" id="TIGR01925">
    <property type="entry name" value="spIIAB"/>
    <property type="match status" value="1"/>
</dbReference>
<dbReference type="PANTHER" id="PTHR35526:SF3">
    <property type="entry name" value="ANTI-SIGMA-F FACTOR RSBW"/>
    <property type="match status" value="1"/>
</dbReference>
<dbReference type="PANTHER" id="PTHR35526">
    <property type="entry name" value="ANTI-SIGMA-F FACTOR RSBW-RELATED"/>
    <property type="match status" value="1"/>
</dbReference>
<dbReference type="Pfam" id="PF13581">
    <property type="entry name" value="HATPase_c_2"/>
    <property type="match status" value="1"/>
</dbReference>
<dbReference type="SMART" id="SM00387">
    <property type="entry name" value="HATPase_c"/>
    <property type="match status" value="1"/>
</dbReference>
<dbReference type="SUPFAM" id="SSF55874">
    <property type="entry name" value="ATPase domain of HSP90 chaperone/DNA topoisomerase II/histidine kinase"/>
    <property type="match status" value="1"/>
</dbReference>
<evidence type="ECO:0000255" key="1">
    <source>
        <dbReference type="HAMAP-Rule" id="MF_00637"/>
    </source>
</evidence>
<name>SP2AB_CLOAB</name>
<sequence>MLENKMELKFLAKSENESFARVTVASFASELDPTLEEIDDVKMAVSEAVTNAIIHGYENKGGVVTICAVIEDRELTIEVMDEGIGIENIEKAMEPLYTSRPDLERSGMGFTVMESFMDNIKVESEKGKGTKIIMKKKFALIED</sequence>
<feature type="chain" id="PRO_0000203562" description="Anti-sigma F factor">
    <location>
        <begin position="1"/>
        <end position="143"/>
    </location>
</feature>
<keyword id="KW-0067">ATP-binding</keyword>
<keyword id="KW-0418">Kinase</keyword>
<keyword id="KW-0547">Nucleotide-binding</keyword>
<keyword id="KW-1185">Reference proteome</keyword>
<keyword id="KW-0723">Serine/threonine-protein kinase</keyword>
<keyword id="KW-0749">Sporulation</keyword>
<keyword id="KW-0808">Transferase</keyword>
<organism>
    <name type="scientific">Clostridium acetobutylicum (strain ATCC 824 / DSM 792 / JCM 1419 / IAM 19013 / LMG 5710 / NBRC 13948 / NRRL B-527 / VKM B-1787 / 2291 / W)</name>
    <dbReference type="NCBI Taxonomy" id="272562"/>
    <lineage>
        <taxon>Bacteria</taxon>
        <taxon>Bacillati</taxon>
        <taxon>Bacillota</taxon>
        <taxon>Clostridia</taxon>
        <taxon>Eubacteriales</taxon>
        <taxon>Clostridiaceae</taxon>
        <taxon>Clostridium</taxon>
    </lineage>
</organism>
<comment type="function">
    <text evidence="1">Binds to sigma F and blocks its ability to form an RNA polymerase holoenzyme (E-sigma F). Phosphorylates SpoIIAA on a serine residue. This phosphorylation may enable SpoIIAA to act as an anti-anti-sigma factor that counteracts SpoIIAB and thus releases sigma F from inhibition.</text>
</comment>
<comment type="catalytic activity">
    <reaction evidence="1">
        <text>L-seryl-[protein] + ATP = O-phospho-L-seryl-[protein] + ADP + H(+)</text>
        <dbReference type="Rhea" id="RHEA:17989"/>
        <dbReference type="Rhea" id="RHEA-COMP:9863"/>
        <dbReference type="Rhea" id="RHEA-COMP:11604"/>
        <dbReference type="ChEBI" id="CHEBI:15378"/>
        <dbReference type="ChEBI" id="CHEBI:29999"/>
        <dbReference type="ChEBI" id="CHEBI:30616"/>
        <dbReference type="ChEBI" id="CHEBI:83421"/>
        <dbReference type="ChEBI" id="CHEBI:456216"/>
        <dbReference type="EC" id="2.7.11.1"/>
    </reaction>
</comment>
<comment type="catalytic activity">
    <reaction evidence="1">
        <text>L-threonyl-[protein] + ATP = O-phospho-L-threonyl-[protein] + ADP + H(+)</text>
        <dbReference type="Rhea" id="RHEA:46608"/>
        <dbReference type="Rhea" id="RHEA-COMP:11060"/>
        <dbReference type="Rhea" id="RHEA-COMP:11605"/>
        <dbReference type="ChEBI" id="CHEBI:15378"/>
        <dbReference type="ChEBI" id="CHEBI:30013"/>
        <dbReference type="ChEBI" id="CHEBI:30616"/>
        <dbReference type="ChEBI" id="CHEBI:61977"/>
        <dbReference type="ChEBI" id="CHEBI:456216"/>
        <dbReference type="EC" id="2.7.11.1"/>
    </reaction>
</comment>
<comment type="similarity">
    <text evidence="1">Belongs to the anti-sigma-factor family.</text>
</comment>
<accession>Q97GQ9</accession>